<organism>
    <name type="scientific">Streptococcus pyogenes serotype M12 (strain MGAS2096)</name>
    <dbReference type="NCBI Taxonomy" id="370553"/>
    <lineage>
        <taxon>Bacteria</taxon>
        <taxon>Bacillati</taxon>
        <taxon>Bacillota</taxon>
        <taxon>Bacilli</taxon>
        <taxon>Lactobacillales</taxon>
        <taxon>Streptococcaceae</taxon>
        <taxon>Streptococcus</taxon>
    </lineage>
</organism>
<name>METN_STRPB</name>
<comment type="function">
    <text evidence="1">Part of the ABC transporter complex MetNIQ involved in methionine import. Responsible for energy coupling to the transport system.</text>
</comment>
<comment type="catalytic activity">
    <reaction evidence="1">
        <text>L-methionine(out) + ATP + H2O = L-methionine(in) + ADP + phosphate + H(+)</text>
        <dbReference type="Rhea" id="RHEA:29779"/>
        <dbReference type="ChEBI" id="CHEBI:15377"/>
        <dbReference type="ChEBI" id="CHEBI:15378"/>
        <dbReference type="ChEBI" id="CHEBI:30616"/>
        <dbReference type="ChEBI" id="CHEBI:43474"/>
        <dbReference type="ChEBI" id="CHEBI:57844"/>
        <dbReference type="ChEBI" id="CHEBI:456216"/>
        <dbReference type="EC" id="7.4.2.11"/>
    </reaction>
</comment>
<comment type="catalytic activity">
    <reaction evidence="1">
        <text>D-methionine(out) + ATP + H2O = D-methionine(in) + ADP + phosphate + H(+)</text>
        <dbReference type="Rhea" id="RHEA:29767"/>
        <dbReference type="ChEBI" id="CHEBI:15377"/>
        <dbReference type="ChEBI" id="CHEBI:15378"/>
        <dbReference type="ChEBI" id="CHEBI:30616"/>
        <dbReference type="ChEBI" id="CHEBI:43474"/>
        <dbReference type="ChEBI" id="CHEBI:57932"/>
        <dbReference type="ChEBI" id="CHEBI:456216"/>
        <dbReference type="EC" id="7.4.2.11"/>
    </reaction>
</comment>
<comment type="subunit">
    <text evidence="1">The complex is composed of two ATP-binding proteins (MetN), two transmembrane proteins (MetI) and a solute-binding protein (MetQ).</text>
</comment>
<comment type="subcellular location">
    <subcellularLocation>
        <location evidence="1">Cell membrane</location>
        <topology evidence="1">Peripheral membrane protein</topology>
    </subcellularLocation>
</comment>
<comment type="similarity">
    <text evidence="1">Belongs to the ABC transporter superfamily. Methionine importer (TC 3.A.1.24) family.</text>
</comment>
<proteinExistence type="inferred from homology"/>
<dbReference type="EC" id="7.4.2.11" evidence="1"/>
<dbReference type="EMBL" id="CP000261">
    <property type="protein sequence ID" value="ABF35342.1"/>
    <property type="molecule type" value="Genomic_DNA"/>
</dbReference>
<dbReference type="SMR" id="Q1JDG6"/>
<dbReference type="KEGG" id="spj:MGAS2096_Spy0290"/>
<dbReference type="HOGENOM" id="CLU_000604_1_3_9"/>
<dbReference type="GO" id="GO:0005886">
    <property type="term" value="C:plasma membrane"/>
    <property type="evidence" value="ECO:0007669"/>
    <property type="project" value="UniProtKB-SubCell"/>
</dbReference>
<dbReference type="GO" id="GO:0033232">
    <property type="term" value="F:ABC-type D-methionine transporter activity"/>
    <property type="evidence" value="ECO:0007669"/>
    <property type="project" value="UniProtKB-EC"/>
</dbReference>
<dbReference type="GO" id="GO:0005524">
    <property type="term" value="F:ATP binding"/>
    <property type="evidence" value="ECO:0007669"/>
    <property type="project" value="UniProtKB-KW"/>
</dbReference>
<dbReference type="GO" id="GO:0016887">
    <property type="term" value="F:ATP hydrolysis activity"/>
    <property type="evidence" value="ECO:0007669"/>
    <property type="project" value="InterPro"/>
</dbReference>
<dbReference type="CDD" id="cd03258">
    <property type="entry name" value="ABC_MetN_methionine_transporter"/>
    <property type="match status" value="1"/>
</dbReference>
<dbReference type="Gene3D" id="3.30.70.260">
    <property type="match status" value="1"/>
</dbReference>
<dbReference type="Gene3D" id="3.40.50.300">
    <property type="entry name" value="P-loop containing nucleotide triphosphate hydrolases"/>
    <property type="match status" value="1"/>
</dbReference>
<dbReference type="InterPro" id="IPR003593">
    <property type="entry name" value="AAA+_ATPase"/>
</dbReference>
<dbReference type="InterPro" id="IPR003439">
    <property type="entry name" value="ABC_transporter-like_ATP-bd"/>
</dbReference>
<dbReference type="InterPro" id="IPR017871">
    <property type="entry name" value="ABC_transporter-like_CS"/>
</dbReference>
<dbReference type="InterPro" id="IPR045865">
    <property type="entry name" value="ACT-like_dom_sf"/>
</dbReference>
<dbReference type="InterPro" id="IPR041701">
    <property type="entry name" value="MetN_ABC"/>
</dbReference>
<dbReference type="InterPro" id="IPR050086">
    <property type="entry name" value="MetN_ABC_transporter-like"/>
</dbReference>
<dbReference type="InterPro" id="IPR018449">
    <property type="entry name" value="NIL_domain"/>
</dbReference>
<dbReference type="InterPro" id="IPR027417">
    <property type="entry name" value="P-loop_NTPase"/>
</dbReference>
<dbReference type="PANTHER" id="PTHR43166">
    <property type="entry name" value="AMINO ACID IMPORT ATP-BINDING PROTEIN"/>
    <property type="match status" value="1"/>
</dbReference>
<dbReference type="PANTHER" id="PTHR43166:SF30">
    <property type="entry name" value="METHIONINE IMPORT ATP-BINDING PROTEIN METN"/>
    <property type="match status" value="1"/>
</dbReference>
<dbReference type="Pfam" id="PF00005">
    <property type="entry name" value="ABC_tran"/>
    <property type="match status" value="1"/>
</dbReference>
<dbReference type="Pfam" id="PF09383">
    <property type="entry name" value="NIL"/>
    <property type="match status" value="1"/>
</dbReference>
<dbReference type="SMART" id="SM00382">
    <property type="entry name" value="AAA"/>
    <property type="match status" value="1"/>
</dbReference>
<dbReference type="SMART" id="SM00930">
    <property type="entry name" value="NIL"/>
    <property type="match status" value="1"/>
</dbReference>
<dbReference type="SUPFAM" id="SSF55021">
    <property type="entry name" value="ACT-like"/>
    <property type="match status" value="1"/>
</dbReference>
<dbReference type="SUPFAM" id="SSF52540">
    <property type="entry name" value="P-loop containing nucleoside triphosphate hydrolases"/>
    <property type="match status" value="1"/>
</dbReference>
<dbReference type="PROSITE" id="PS00211">
    <property type="entry name" value="ABC_TRANSPORTER_1"/>
    <property type="match status" value="1"/>
</dbReference>
<dbReference type="PROSITE" id="PS50893">
    <property type="entry name" value="ABC_TRANSPORTER_2"/>
    <property type="match status" value="1"/>
</dbReference>
<dbReference type="PROSITE" id="PS51264">
    <property type="entry name" value="METN"/>
    <property type="match status" value="1"/>
</dbReference>
<reference key="1">
    <citation type="journal article" date="2006" name="Proc. Natl. Acad. Sci. U.S.A.">
        <title>Molecular genetic anatomy of inter- and intraserotype variation in the human bacterial pathogen group A Streptococcus.</title>
        <authorList>
            <person name="Beres S.B."/>
            <person name="Richter E.W."/>
            <person name="Nagiec M.J."/>
            <person name="Sumby P."/>
            <person name="Porcella S.F."/>
            <person name="DeLeo F.R."/>
            <person name="Musser J.M."/>
        </authorList>
    </citation>
    <scope>NUCLEOTIDE SEQUENCE [LARGE SCALE GENOMIC DNA]</scope>
    <source>
        <strain>MGAS2096</strain>
    </source>
</reference>
<evidence type="ECO:0000255" key="1">
    <source>
        <dbReference type="HAMAP-Rule" id="MF_01719"/>
    </source>
</evidence>
<keyword id="KW-0029">Amino-acid transport</keyword>
<keyword id="KW-0067">ATP-binding</keyword>
<keyword id="KW-1003">Cell membrane</keyword>
<keyword id="KW-0472">Membrane</keyword>
<keyword id="KW-0547">Nucleotide-binding</keyword>
<keyword id="KW-1278">Translocase</keyword>
<keyword id="KW-0813">Transport</keyword>
<accession>Q1JDG6</accession>
<gene>
    <name evidence="1" type="primary">metN</name>
    <name type="ordered locus">MGAS2096_Spy0290</name>
</gene>
<sequence>MNEAIIQLDHIDITFRQKKRVIEAVKDVTVHINQGDIYGIVGYSGAGKSTLVRVINLLQAPTNGKITVDGDVTFDQGKVQLSANALRQKRRDIGMIFQHFNLMAQKTAKENVAFALRHSSLSKTEKEHKVIELLELVGLSERADNYPAQLSGGQKQRVAIARALANDPKILISDEATSALDPKTTKQILALLQELNRKLGLTIVMITHEMQIVKDICNRVAVMQNGVLIEEGSVLDIFSNPKEALTQEFITTATGIDEALEKINQQDIVKHLPANALLAQLKYAGTSTDEPLLNSIYRQFEVTANILYGNIEILDHIPVGDMIVVLEGQAENILAAEKALHEAGVDVSILKRGA</sequence>
<feature type="chain" id="PRO_0000270418" description="Methionine import ATP-binding protein MetN">
    <location>
        <begin position="1"/>
        <end position="354"/>
    </location>
</feature>
<feature type="domain" description="ABC transporter" evidence="1">
    <location>
        <begin position="8"/>
        <end position="250"/>
    </location>
</feature>
<feature type="binding site" evidence="1">
    <location>
        <begin position="42"/>
        <end position="49"/>
    </location>
    <ligand>
        <name>ATP</name>
        <dbReference type="ChEBI" id="CHEBI:30616"/>
    </ligand>
</feature>
<protein>
    <recommendedName>
        <fullName evidence="1">Methionine import ATP-binding protein MetN</fullName>
        <ecNumber evidence="1">7.4.2.11</ecNumber>
    </recommendedName>
</protein>